<geneLocation type="mitochondrion"/>
<dbReference type="EMBL" id="AF034733">
    <property type="protein sequence ID" value="AAC31688.1"/>
    <property type="molecule type" value="Genomic_DNA"/>
</dbReference>
<dbReference type="RefSeq" id="YP_007625132.1">
    <property type="nucleotide sequence ID" value="NC_020628.1"/>
</dbReference>
<dbReference type="SMR" id="O78783"/>
<dbReference type="GeneID" id="14841683"/>
<dbReference type="CTD" id="4519"/>
<dbReference type="GO" id="GO:0005743">
    <property type="term" value="C:mitochondrial inner membrane"/>
    <property type="evidence" value="ECO:0007669"/>
    <property type="project" value="UniProtKB-SubCell"/>
</dbReference>
<dbReference type="GO" id="GO:0045275">
    <property type="term" value="C:respiratory chain complex III"/>
    <property type="evidence" value="ECO:0007669"/>
    <property type="project" value="InterPro"/>
</dbReference>
<dbReference type="GO" id="GO:0046872">
    <property type="term" value="F:metal ion binding"/>
    <property type="evidence" value="ECO:0007669"/>
    <property type="project" value="UniProtKB-KW"/>
</dbReference>
<dbReference type="GO" id="GO:0008121">
    <property type="term" value="F:ubiquinol-cytochrome-c reductase activity"/>
    <property type="evidence" value="ECO:0007669"/>
    <property type="project" value="InterPro"/>
</dbReference>
<dbReference type="GO" id="GO:0006122">
    <property type="term" value="P:mitochondrial electron transport, ubiquinol to cytochrome c"/>
    <property type="evidence" value="ECO:0007669"/>
    <property type="project" value="TreeGrafter"/>
</dbReference>
<dbReference type="CDD" id="cd00290">
    <property type="entry name" value="cytochrome_b_C"/>
    <property type="match status" value="1"/>
</dbReference>
<dbReference type="CDD" id="cd00284">
    <property type="entry name" value="Cytochrome_b_N"/>
    <property type="match status" value="1"/>
</dbReference>
<dbReference type="FunFam" id="1.20.810.10:FF:000002">
    <property type="entry name" value="Cytochrome b"/>
    <property type="match status" value="1"/>
</dbReference>
<dbReference type="Gene3D" id="1.20.810.10">
    <property type="entry name" value="Cytochrome Bc1 Complex, Chain C"/>
    <property type="match status" value="1"/>
</dbReference>
<dbReference type="InterPro" id="IPR005798">
    <property type="entry name" value="Cyt_b/b6_C"/>
</dbReference>
<dbReference type="InterPro" id="IPR036150">
    <property type="entry name" value="Cyt_b/b6_C_sf"/>
</dbReference>
<dbReference type="InterPro" id="IPR005797">
    <property type="entry name" value="Cyt_b/b6_N"/>
</dbReference>
<dbReference type="InterPro" id="IPR027387">
    <property type="entry name" value="Cytb/b6-like_sf"/>
</dbReference>
<dbReference type="InterPro" id="IPR030689">
    <property type="entry name" value="Cytochrome_b"/>
</dbReference>
<dbReference type="InterPro" id="IPR048260">
    <property type="entry name" value="Cytochrome_b_C_euk/bac"/>
</dbReference>
<dbReference type="InterPro" id="IPR048259">
    <property type="entry name" value="Cytochrome_b_N_euk/bac"/>
</dbReference>
<dbReference type="InterPro" id="IPR016174">
    <property type="entry name" value="Di-haem_cyt_TM"/>
</dbReference>
<dbReference type="PANTHER" id="PTHR19271">
    <property type="entry name" value="CYTOCHROME B"/>
    <property type="match status" value="1"/>
</dbReference>
<dbReference type="PANTHER" id="PTHR19271:SF16">
    <property type="entry name" value="CYTOCHROME B"/>
    <property type="match status" value="1"/>
</dbReference>
<dbReference type="Pfam" id="PF00032">
    <property type="entry name" value="Cytochrom_B_C"/>
    <property type="match status" value="1"/>
</dbReference>
<dbReference type="Pfam" id="PF00033">
    <property type="entry name" value="Cytochrome_B"/>
    <property type="match status" value="1"/>
</dbReference>
<dbReference type="PIRSF" id="PIRSF038885">
    <property type="entry name" value="COB"/>
    <property type="match status" value="1"/>
</dbReference>
<dbReference type="SUPFAM" id="SSF81648">
    <property type="entry name" value="a domain/subunit of cytochrome bc1 complex (Ubiquinol-cytochrome c reductase)"/>
    <property type="match status" value="1"/>
</dbReference>
<dbReference type="SUPFAM" id="SSF81342">
    <property type="entry name" value="Transmembrane di-heme cytochromes"/>
    <property type="match status" value="1"/>
</dbReference>
<dbReference type="PROSITE" id="PS51003">
    <property type="entry name" value="CYTB_CTER"/>
    <property type="match status" value="1"/>
</dbReference>
<dbReference type="PROSITE" id="PS51002">
    <property type="entry name" value="CYTB_NTER"/>
    <property type="match status" value="1"/>
</dbReference>
<gene>
    <name type="primary">MT-CYB</name>
    <name type="synonym">COB</name>
    <name type="synonym">CYTB</name>
    <name type="synonym">MTCYB</name>
</gene>
<sequence length="379" mass="42817">MTNIRKTHPLMKIVNNAFIDLPTPSNISSWWNFGSLLGICLILQILTGLFLAMHYTSDTMTAFSSVTHICRDVNYGWIIRYMHANGASMFFICLFMHIGRGLYYGSYTFLETWNIGVILLLATMATAFMGYVLPWGQMSFWGATVITNLLSAIPYIGTNLVEWIWGGFSVDKATLTRFFAFHFILPFIIAALAMVHLLFLHETGSNNPTGIPSDTDKIPFHPYYTIKDILGAMLLILVLMLLVLFMPDLLGDPDNYTPANPLNTPPHIKPEWYFLFAYAILRSIPNKLGGVLALVLSILILTLVPFLHTSKQRSMMFRPISQCMFWILAADLLTLTWIGGQPVEHPYIIIGQLASIMYFLIILVMMPAASTIENNLLKW</sequence>
<accession>O78783</accession>
<reference key="1">
    <citation type="journal article" date="1998" name="J. Mammal. Evol.">
        <title>Molecular systematics of the subfamily Caprinae (Artiodactyla, Bovidae) as determined from cytochrome b sequences.</title>
        <authorList>
            <person name="Hassanin A."/>
            <person name="Pasquet E."/>
            <person name="Vigne J.-D."/>
        </authorList>
    </citation>
    <scope>NUCLEOTIDE SEQUENCE [GENOMIC DNA]</scope>
</reference>
<protein>
    <recommendedName>
        <fullName>Cytochrome b</fullName>
    </recommendedName>
    <alternativeName>
        <fullName>Complex III subunit 3</fullName>
    </alternativeName>
    <alternativeName>
        <fullName>Complex III subunit III</fullName>
    </alternativeName>
    <alternativeName>
        <fullName>Cytochrome b-c1 complex subunit 3</fullName>
    </alternativeName>
    <alternativeName>
        <fullName>Ubiquinol-cytochrome-c reductase complex cytochrome b subunit</fullName>
    </alternativeName>
</protein>
<name>CYB_HEMJE</name>
<proteinExistence type="inferred from homology"/>
<feature type="chain" id="PRO_0000061030" description="Cytochrome b">
    <location>
        <begin position="1"/>
        <end position="379"/>
    </location>
</feature>
<feature type="transmembrane region" description="Helical" evidence="2">
    <location>
        <begin position="33"/>
        <end position="53"/>
    </location>
</feature>
<feature type="transmembrane region" description="Helical" evidence="2">
    <location>
        <begin position="77"/>
        <end position="98"/>
    </location>
</feature>
<feature type="transmembrane region" description="Helical" evidence="2">
    <location>
        <begin position="113"/>
        <end position="133"/>
    </location>
</feature>
<feature type="transmembrane region" description="Helical" evidence="2">
    <location>
        <begin position="178"/>
        <end position="198"/>
    </location>
</feature>
<feature type="transmembrane region" description="Helical" evidence="2">
    <location>
        <begin position="226"/>
        <end position="246"/>
    </location>
</feature>
<feature type="transmembrane region" description="Helical" evidence="2">
    <location>
        <begin position="288"/>
        <end position="308"/>
    </location>
</feature>
<feature type="transmembrane region" description="Helical" evidence="2">
    <location>
        <begin position="320"/>
        <end position="340"/>
    </location>
</feature>
<feature type="transmembrane region" description="Helical" evidence="2">
    <location>
        <begin position="347"/>
        <end position="367"/>
    </location>
</feature>
<feature type="binding site" description="axial binding residue" evidence="2">
    <location>
        <position position="83"/>
    </location>
    <ligand>
        <name>heme b</name>
        <dbReference type="ChEBI" id="CHEBI:60344"/>
        <label>b562</label>
    </ligand>
    <ligandPart>
        <name>Fe</name>
        <dbReference type="ChEBI" id="CHEBI:18248"/>
    </ligandPart>
</feature>
<feature type="binding site" description="axial binding residue" evidence="2">
    <location>
        <position position="97"/>
    </location>
    <ligand>
        <name>heme b</name>
        <dbReference type="ChEBI" id="CHEBI:60344"/>
        <label>b566</label>
    </ligand>
    <ligandPart>
        <name>Fe</name>
        <dbReference type="ChEBI" id="CHEBI:18248"/>
    </ligandPart>
</feature>
<feature type="binding site" description="axial binding residue" evidence="2">
    <location>
        <position position="182"/>
    </location>
    <ligand>
        <name>heme b</name>
        <dbReference type="ChEBI" id="CHEBI:60344"/>
        <label>b562</label>
    </ligand>
    <ligandPart>
        <name>Fe</name>
        <dbReference type="ChEBI" id="CHEBI:18248"/>
    </ligandPart>
</feature>
<feature type="binding site" description="axial binding residue" evidence="2">
    <location>
        <position position="196"/>
    </location>
    <ligand>
        <name>heme b</name>
        <dbReference type="ChEBI" id="CHEBI:60344"/>
        <label>b566</label>
    </ligand>
    <ligandPart>
        <name>Fe</name>
        <dbReference type="ChEBI" id="CHEBI:18248"/>
    </ligandPart>
</feature>
<feature type="binding site" evidence="2">
    <location>
        <position position="201"/>
    </location>
    <ligand>
        <name>a ubiquinone</name>
        <dbReference type="ChEBI" id="CHEBI:16389"/>
    </ligand>
</feature>
<keyword id="KW-0249">Electron transport</keyword>
<keyword id="KW-0349">Heme</keyword>
<keyword id="KW-0408">Iron</keyword>
<keyword id="KW-0472">Membrane</keyword>
<keyword id="KW-0479">Metal-binding</keyword>
<keyword id="KW-0496">Mitochondrion</keyword>
<keyword id="KW-0999">Mitochondrion inner membrane</keyword>
<keyword id="KW-0679">Respiratory chain</keyword>
<keyword id="KW-0812">Transmembrane</keyword>
<keyword id="KW-1133">Transmembrane helix</keyword>
<keyword id="KW-0813">Transport</keyword>
<keyword id="KW-0830">Ubiquinone</keyword>
<comment type="function">
    <text evidence="2">Component of the ubiquinol-cytochrome c reductase complex (complex III or cytochrome b-c1 complex) that is part of the mitochondrial respiratory chain. The b-c1 complex mediates electron transfer from ubiquinol to cytochrome c. Contributes to the generation of a proton gradient across the mitochondrial membrane that is then used for ATP synthesis.</text>
</comment>
<comment type="cofactor">
    <cofactor evidence="2">
        <name>heme b</name>
        <dbReference type="ChEBI" id="CHEBI:60344"/>
    </cofactor>
    <text evidence="2">Binds 2 heme b groups non-covalently.</text>
</comment>
<comment type="subunit">
    <text evidence="2">The cytochrome bc1 complex contains 11 subunits: 3 respiratory subunits (MT-CYB, CYC1 and UQCRFS1), 2 core proteins (UQCRC1 and UQCRC2) and 6 low-molecular weight proteins (UQCRH/QCR6, UQCRB/QCR7, UQCRQ/QCR8, UQCR10/QCR9, UQCR11/QCR10 and a cleavage product of UQCRFS1). This cytochrome bc1 complex then forms a dimer.</text>
</comment>
<comment type="subcellular location">
    <subcellularLocation>
        <location evidence="2">Mitochondrion inner membrane</location>
        <topology evidence="2">Multi-pass membrane protein</topology>
    </subcellularLocation>
</comment>
<comment type="miscellaneous">
    <text evidence="1">Heme 1 (or BL or b562) is low-potential and absorbs at about 562 nm, and heme 2 (or BH or b566) is high-potential and absorbs at about 566 nm.</text>
</comment>
<comment type="similarity">
    <text evidence="3 4">Belongs to the cytochrome b family.</text>
</comment>
<comment type="caution">
    <text evidence="2">The full-length protein contains only eight transmembrane helices, not nine as predicted by bioinformatics tools.</text>
</comment>
<organism>
    <name type="scientific">Hemitragus jemlahicus</name>
    <name type="common">Himalayan tahr</name>
    <dbReference type="NCBI Taxonomy" id="37179"/>
    <lineage>
        <taxon>Eukaryota</taxon>
        <taxon>Metazoa</taxon>
        <taxon>Chordata</taxon>
        <taxon>Craniata</taxon>
        <taxon>Vertebrata</taxon>
        <taxon>Euteleostomi</taxon>
        <taxon>Mammalia</taxon>
        <taxon>Eutheria</taxon>
        <taxon>Laurasiatheria</taxon>
        <taxon>Artiodactyla</taxon>
        <taxon>Ruminantia</taxon>
        <taxon>Pecora</taxon>
        <taxon>Bovidae</taxon>
        <taxon>Caprinae</taxon>
        <taxon>Hemitragus</taxon>
    </lineage>
</organism>
<evidence type="ECO:0000250" key="1"/>
<evidence type="ECO:0000250" key="2">
    <source>
        <dbReference type="UniProtKB" id="P00157"/>
    </source>
</evidence>
<evidence type="ECO:0000255" key="3">
    <source>
        <dbReference type="PROSITE-ProRule" id="PRU00967"/>
    </source>
</evidence>
<evidence type="ECO:0000255" key="4">
    <source>
        <dbReference type="PROSITE-ProRule" id="PRU00968"/>
    </source>
</evidence>